<dbReference type="EMBL" id="U00089">
    <property type="protein sequence ID" value="AAB95681.1"/>
    <property type="molecule type" value="Genomic_DNA"/>
</dbReference>
<dbReference type="PIR" id="S73359">
    <property type="entry name" value="S73359"/>
</dbReference>
<dbReference type="RefSeq" id="NP_109809.1">
    <property type="nucleotide sequence ID" value="NC_000912.1"/>
</dbReference>
<dbReference type="RefSeq" id="WP_010874478.1">
    <property type="nucleotide sequence ID" value="NZ_OU342337.1"/>
</dbReference>
<dbReference type="SMR" id="P75353"/>
<dbReference type="IntAct" id="P75353">
    <property type="interactions" value="2"/>
</dbReference>
<dbReference type="STRING" id="272634.MPN_121"/>
<dbReference type="EnsemblBacteria" id="AAB95681">
    <property type="protein sequence ID" value="AAB95681"/>
    <property type="gene ID" value="MPN_121"/>
</dbReference>
<dbReference type="KEGG" id="mpn:MPN_121"/>
<dbReference type="PATRIC" id="fig|272634.6.peg.128"/>
<dbReference type="HOGENOM" id="CLU_2035480_0_0_14"/>
<dbReference type="OrthoDB" id="9921551at2"/>
<dbReference type="BioCyc" id="MPNE272634:G1GJ3-201-MONOMER"/>
<dbReference type="Proteomes" id="UP000000808">
    <property type="component" value="Chromosome"/>
</dbReference>
<dbReference type="NCBIfam" id="NF045738">
    <property type="entry name" value="MPN121"/>
    <property type="match status" value="1"/>
</dbReference>
<gene>
    <name type="ordered locus">MPN_121</name>
    <name type="ORF">C09_orf121</name>
    <name type="ORF">MP033</name>
</gene>
<sequence length="121" mass="13321">MSTNKRRTIQIEITEEHFKDLEKALEALKGTQLPFSTTVEQFVELILSNYVATSNKISNLAESGFDVASIQQELEKIGSAAGADDALKSFLDELLKTSQKSFSNTKDGKKNDDDNNSSSKS</sequence>
<reference key="1">
    <citation type="journal article" date="1996" name="Nucleic Acids Res.">
        <title>Complete sequence analysis of the genome of the bacterium Mycoplasma pneumoniae.</title>
        <authorList>
            <person name="Himmelreich R."/>
            <person name="Hilbert H."/>
            <person name="Plagens H."/>
            <person name="Pirkl E."/>
            <person name="Li B.-C."/>
            <person name="Herrmann R."/>
        </authorList>
    </citation>
    <scope>NUCLEOTIDE SEQUENCE [LARGE SCALE GENOMIC DNA]</scope>
    <source>
        <strain>ATCC 29342 / M129 / Subtype 1</strain>
    </source>
</reference>
<protein>
    <recommendedName>
        <fullName>Uncharacterized protein MG202 homolog</fullName>
    </recommendedName>
</protein>
<organism>
    <name type="scientific">Mycoplasma pneumoniae (strain ATCC 29342 / M129 / Subtype 1)</name>
    <name type="common">Mycoplasmoides pneumoniae</name>
    <dbReference type="NCBI Taxonomy" id="272634"/>
    <lineage>
        <taxon>Bacteria</taxon>
        <taxon>Bacillati</taxon>
        <taxon>Mycoplasmatota</taxon>
        <taxon>Mycoplasmoidales</taxon>
        <taxon>Mycoplasmoidaceae</taxon>
        <taxon>Mycoplasmoides</taxon>
    </lineage>
</organism>
<keyword id="KW-1185">Reference proteome</keyword>
<feature type="chain" id="PRO_0000210453" description="Uncharacterized protein MG202 homolog">
    <location>
        <begin position="1"/>
        <end position="121"/>
    </location>
</feature>
<feature type="region of interest" description="Disordered" evidence="1">
    <location>
        <begin position="100"/>
        <end position="121"/>
    </location>
</feature>
<name>Y121_MYCPN</name>
<proteinExistence type="predicted"/>
<accession>P75353</accession>
<evidence type="ECO:0000256" key="1">
    <source>
        <dbReference type="SAM" id="MobiDB-lite"/>
    </source>
</evidence>